<protein>
    <recommendedName>
        <fullName evidence="1">Agmatinase</fullName>
        <ecNumber evidence="1">3.5.3.11</ecNumber>
    </recommendedName>
    <alternativeName>
        <fullName evidence="1">Agmatine ureohydrolase</fullName>
        <shortName evidence="1">AUH</shortName>
    </alternativeName>
</protein>
<keyword id="KW-0378">Hydrolase</keyword>
<keyword id="KW-0464">Manganese</keyword>
<keyword id="KW-0479">Metal-binding</keyword>
<keyword id="KW-0620">Polyamine biosynthesis</keyword>
<keyword id="KW-0661">Putrescine biosynthesis</keyword>
<keyword id="KW-0745">Spermidine biosynthesis</keyword>
<dbReference type="EC" id="3.5.3.11" evidence="1"/>
<dbReference type="EMBL" id="CP000026">
    <property type="protein sequence ID" value="AAV78787.1"/>
    <property type="molecule type" value="Genomic_DNA"/>
</dbReference>
<dbReference type="RefSeq" id="WP_000105550.1">
    <property type="nucleotide sequence ID" value="NC_006511.1"/>
</dbReference>
<dbReference type="SMR" id="Q5PJH7"/>
<dbReference type="KEGG" id="spt:SPA2949"/>
<dbReference type="HOGENOM" id="CLU_039478_0_0_6"/>
<dbReference type="UniPathway" id="UPA00534">
    <property type="reaction ID" value="UER00287"/>
</dbReference>
<dbReference type="Proteomes" id="UP000008185">
    <property type="component" value="Chromosome"/>
</dbReference>
<dbReference type="GO" id="GO:0008783">
    <property type="term" value="F:agmatinase activity"/>
    <property type="evidence" value="ECO:0007669"/>
    <property type="project" value="UniProtKB-UniRule"/>
</dbReference>
<dbReference type="GO" id="GO:0030145">
    <property type="term" value="F:manganese ion binding"/>
    <property type="evidence" value="ECO:0007669"/>
    <property type="project" value="InterPro"/>
</dbReference>
<dbReference type="GO" id="GO:0033389">
    <property type="term" value="P:putrescine biosynthetic process from arginine, via agmatine"/>
    <property type="evidence" value="ECO:0007669"/>
    <property type="project" value="TreeGrafter"/>
</dbReference>
<dbReference type="GO" id="GO:0008295">
    <property type="term" value="P:spermidine biosynthetic process"/>
    <property type="evidence" value="ECO:0007669"/>
    <property type="project" value="UniProtKB-UniRule"/>
</dbReference>
<dbReference type="CDD" id="cd11592">
    <property type="entry name" value="Agmatinase_PAH"/>
    <property type="match status" value="1"/>
</dbReference>
<dbReference type="FunFam" id="3.40.800.10:FF:000001">
    <property type="entry name" value="Agmatinase"/>
    <property type="match status" value="1"/>
</dbReference>
<dbReference type="Gene3D" id="3.40.800.10">
    <property type="entry name" value="Ureohydrolase domain"/>
    <property type="match status" value="1"/>
</dbReference>
<dbReference type="HAMAP" id="MF_01418">
    <property type="entry name" value="SpeB"/>
    <property type="match status" value="1"/>
</dbReference>
<dbReference type="InterPro" id="IPR023694">
    <property type="entry name" value="Agmatinase"/>
</dbReference>
<dbReference type="InterPro" id="IPR005925">
    <property type="entry name" value="Agmatinase-rel"/>
</dbReference>
<dbReference type="InterPro" id="IPR006035">
    <property type="entry name" value="Ureohydrolase"/>
</dbReference>
<dbReference type="InterPro" id="IPR023696">
    <property type="entry name" value="Ureohydrolase_dom_sf"/>
</dbReference>
<dbReference type="InterPro" id="IPR020855">
    <property type="entry name" value="Ureohydrolase_Mn_BS"/>
</dbReference>
<dbReference type="NCBIfam" id="TIGR01230">
    <property type="entry name" value="agmatinase"/>
    <property type="match status" value="1"/>
</dbReference>
<dbReference type="NCBIfam" id="NF002564">
    <property type="entry name" value="PRK02190.1"/>
    <property type="match status" value="1"/>
</dbReference>
<dbReference type="PANTHER" id="PTHR11358">
    <property type="entry name" value="ARGINASE/AGMATINASE"/>
    <property type="match status" value="1"/>
</dbReference>
<dbReference type="PANTHER" id="PTHR11358:SF26">
    <property type="entry name" value="GUANIDINO ACID HYDROLASE, MITOCHONDRIAL"/>
    <property type="match status" value="1"/>
</dbReference>
<dbReference type="Pfam" id="PF00491">
    <property type="entry name" value="Arginase"/>
    <property type="match status" value="1"/>
</dbReference>
<dbReference type="PIRSF" id="PIRSF036979">
    <property type="entry name" value="Arginase"/>
    <property type="match status" value="1"/>
</dbReference>
<dbReference type="SUPFAM" id="SSF52768">
    <property type="entry name" value="Arginase/deacetylase"/>
    <property type="match status" value="1"/>
</dbReference>
<dbReference type="PROSITE" id="PS01053">
    <property type="entry name" value="ARGINASE_1"/>
    <property type="match status" value="1"/>
</dbReference>
<dbReference type="PROSITE" id="PS51409">
    <property type="entry name" value="ARGINASE_2"/>
    <property type="match status" value="1"/>
</dbReference>
<name>SPEB_SALPA</name>
<sequence length="306" mass="33603">MSTLGHQYDNSLVSNAFGFLRLPMNFQPYDSDADWVITGVPFDMATSGRAGGRHGPAAIRQVSTNLAWEHHRFPWNFDMRERLNVVDCGDLVYAFGDAREMSEKLQAHAEKLLSAGKRMLSFGGDHFVTLPLLRAHAKHFGKMALVHFDAHTDTYANGCEFDHGTMFYTAPKEGLIDPHHSVQIGIRTEFDKDNGFTVLDACQVNDRGVDDILAQVKQIVGDMPVYLTFDIDCLDPAFAPGTGTPVIGGLTSDRAIKLVRGLKDLNIVGMDVVEVAPAYDQSEITALAAATLALEMLYIQAAKKGE</sequence>
<accession>Q5PJH7</accession>
<reference key="1">
    <citation type="journal article" date="2004" name="Nat. Genet.">
        <title>Comparison of genome degradation in Paratyphi A and Typhi, human-restricted serovars of Salmonella enterica that cause typhoid.</title>
        <authorList>
            <person name="McClelland M."/>
            <person name="Sanderson K.E."/>
            <person name="Clifton S.W."/>
            <person name="Latreille P."/>
            <person name="Porwollik S."/>
            <person name="Sabo A."/>
            <person name="Meyer R."/>
            <person name="Bieri T."/>
            <person name="Ozersky P."/>
            <person name="McLellan M."/>
            <person name="Harkins C.R."/>
            <person name="Wang C."/>
            <person name="Nguyen C."/>
            <person name="Berghoff A."/>
            <person name="Elliott G."/>
            <person name="Kohlberg S."/>
            <person name="Strong C."/>
            <person name="Du F."/>
            <person name="Carter J."/>
            <person name="Kremizki C."/>
            <person name="Layman D."/>
            <person name="Leonard S."/>
            <person name="Sun H."/>
            <person name="Fulton L."/>
            <person name="Nash W."/>
            <person name="Miner T."/>
            <person name="Minx P."/>
            <person name="Delehaunty K."/>
            <person name="Fronick C."/>
            <person name="Magrini V."/>
            <person name="Nhan M."/>
            <person name="Warren W."/>
            <person name="Florea L."/>
            <person name="Spieth J."/>
            <person name="Wilson R.K."/>
        </authorList>
    </citation>
    <scope>NUCLEOTIDE SEQUENCE [LARGE SCALE GENOMIC DNA]</scope>
    <source>
        <strain>ATCC 9150 / SARB42</strain>
    </source>
</reference>
<feature type="chain" id="PRO_0000173740" description="Agmatinase">
    <location>
        <begin position="1"/>
        <end position="306"/>
    </location>
</feature>
<feature type="binding site" evidence="1">
    <location>
        <position position="126"/>
    </location>
    <ligand>
        <name>Mn(2+)</name>
        <dbReference type="ChEBI" id="CHEBI:29035"/>
    </ligand>
</feature>
<feature type="binding site" evidence="1">
    <location>
        <position position="149"/>
    </location>
    <ligand>
        <name>Mn(2+)</name>
        <dbReference type="ChEBI" id="CHEBI:29035"/>
    </ligand>
</feature>
<feature type="binding site" evidence="1">
    <location>
        <position position="151"/>
    </location>
    <ligand>
        <name>Mn(2+)</name>
        <dbReference type="ChEBI" id="CHEBI:29035"/>
    </ligand>
</feature>
<feature type="binding site" evidence="1">
    <location>
        <position position="153"/>
    </location>
    <ligand>
        <name>Mn(2+)</name>
        <dbReference type="ChEBI" id="CHEBI:29035"/>
    </ligand>
</feature>
<feature type="binding site" evidence="1">
    <location>
        <position position="230"/>
    </location>
    <ligand>
        <name>Mn(2+)</name>
        <dbReference type="ChEBI" id="CHEBI:29035"/>
    </ligand>
</feature>
<feature type="binding site" evidence="1">
    <location>
        <position position="232"/>
    </location>
    <ligand>
        <name>Mn(2+)</name>
        <dbReference type="ChEBI" id="CHEBI:29035"/>
    </ligand>
</feature>
<comment type="function">
    <text evidence="1">Catalyzes the formation of putrescine from agmatine.</text>
</comment>
<comment type="catalytic activity">
    <reaction evidence="1">
        <text>agmatine + H2O = urea + putrescine</text>
        <dbReference type="Rhea" id="RHEA:13929"/>
        <dbReference type="ChEBI" id="CHEBI:15377"/>
        <dbReference type="ChEBI" id="CHEBI:16199"/>
        <dbReference type="ChEBI" id="CHEBI:58145"/>
        <dbReference type="ChEBI" id="CHEBI:326268"/>
        <dbReference type="EC" id="3.5.3.11"/>
    </reaction>
</comment>
<comment type="cofactor">
    <cofactor evidence="1">
        <name>Mn(2+)</name>
        <dbReference type="ChEBI" id="CHEBI:29035"/>
    </cofactor>
</comment>
<comment type="pathway">
    <text evidence="1">Amine and polyamine biosynthesis; putrescine biosynthesis via agmatine pathway; putrescine from agmatine: step 1/1.</text>
</comment>
<comment type="similarity">
    <text evidence="1">Belongs to the arginase family. Agmatinase subfamily.</text>
</comment>
<organism>
    <name type="scientific">Salmonella paratyphi A (strain ATCC 9150 / SARB42)</name>
    <dbReference type="NCBI Taxonomy" id="295319"/>
    <lineage>
        <taxon>Bacteria</taxon>
        <taxon>Pseudomonadati</taxon>
        <taxon>Pseudomonadota</taxon>
        <taxon>Gammaproteobacteria</taxon>
        <taxon>Enterobacterales</taxon>
        <taxon>Enterobacteriaceae</taxon>
        <taxon>Salmonella</taxon>
    </lineage>
</organism>
<gene>
    <name evidence="1" type="primary">speB</name>
    <name type="ordered locus">SPA2949</name>
</gene>
<evidence type="ECO:0000255" key="1">
    <source>
        <dbReference type="HAMAP-Rule" id="MF_01418"/>
    </source>
</evidence>
<proteinExistence type="inferred from homology"/>